<protein>
    <recommendedName>
        <fullName>D-alanine--D-alanine ligase B</fullName>
        <ecNumber>6.3.2.4</ecNumber>
    </recommendedName>
    <alternativeName>
        <fullName>D-Ala-D-Ala ligase B</fullName>
    </alternativeName>
    <alternativeName>
        <fullName>D-alanylalanine synthetase B</fullName>
    </alternativeName>
</protein>
<sequence>MADKIAVLLGGTSAERDVSLNSGAAVLAGLREGGIDAHPVDPQEVDVAQLKAMGFQKVFIALHGRGGEDGTLQGMLELLGLPYTGSGVMASALSMDKLRSKLLWQGAGLPVAPWVALTRAEFEKGLSEEQKARISALGLPLIVKPSREGSSVGMTKVVEENALQGALSLAFQHDDEILIEKWLCGPEFTVAIVGEEILPSIRIQPAGTFYDYEAKYLSDETQYFCPAGLEASQEAALQSLVLQAWKALGCTGWGRIDVMLDSDGQFYLLEANTSPGMTSHSLVPMAARQAGMSFSQLVVRILELAD</sequence>
<keyword id="KW-0067">ATP-binding</keyword>
<keyword id="KW-0133">Cell shape</keyword>
<keyword id="KW-0961">Cell wall biogenesis/degradation</keyword>
<keyword id="KW-0963">Cytoplasm</keyword>
<keyword id="KW-0436">Ligase</keyword>
<keyword id="KW-0460">Magnesium</keyword>
<keyword id="KW-0464">Manganese</keyword>
<keyword id="KW-0479">Metal-binding</keyword>
<keyword id="KW-0547">Nucleotide-binding</keyword>
<keyword id="KW-0573">Peptidoglycan synthesis</keyword>
<feature type="initiator methionine" description="Removed" evidence="1">
    <location>
        <position position="1"/>
    </location>
</feature>
<feature type="chain" id="PRO_0000177869" description="D-alanine--D-alanine ligase B">
    <location>
        <begin position="2"/>
        <end position="306"/>
    </location>
</feature>
<feature type="domain" description="ATP-grasp">
    <location>
        <begin position="101"/>
        <end position="303"/>
    </location>
</feature>
<feature type="binding site" evidence="1">
    <location>
        <begin position="134"/>
        <end position="189"/>
    </location>
    <ligand>
        <name>ATP</name>
        <dbReference type="ChEBI" id="CHEBI:30616"/>
    </ligand>
</feature>
<feature type="binding site" evidence="1">
    <location>
        <position position="257"/>
    </location>
    <ligand>
        <name>Mg(2+)</name>
        <dbReference type="ChEBI" id="CHEBI:18420"/>
        <label>1</label>
    </ligand>
</feature>
<feature type="binding site" evidence="1">
    <location>
        <position position="270"/>
    </location>
    <ligand>
        <name>Mg(2+)</name>
        <dbReference type="ChEBI" id="CHEBI:18420"/>
        <label>1</label>
    </ligand>
</feature>
<feature type="binding site" evidence="1">
    <location>
        <position position="270"/>
    </location>
    <ligand>
        <name>Mg(2+)</name>
        <dbReference type="ChEBI" id="CHEBI:18420"/>
        <label>2</label>
    </ligand>
</feature>
<feature type="binding site" evidence="1">
    <location>
        <position position="272"/>
    </location>
    <ligand>
        <name>Mg(2+)</name>
        <dbReference type="ChEBI" id="CHEBI:18420"/>
        <label>2</label>
    </ligand>
</feature>
<organism>
    <name type="scientific">Salmonella typhi</name>
    <dbReference type="NCBI Taxonomy" id="90370"/>
    <lineage>
        <taxon>Bacteria</taxon>
        <taxon>Pseudomonadati</taxon>
        <taxon>Pseudomonadota</taxon>
        <taxon>Gammaproteobacteria</taxon>
        <taxon>Enterobacterales</taxon>
        <taxon>Enterobacteriaceae</taxon>
        <taxon>Salmonella</taxon>
    </lineage>
</organism>
<proteinExistence type="inferred from homology"/>
<comment type="function">
    <text evidence="1">Cell wall formation.</text>
</comment>
<comment type="catalytic activity">
    <reaction>
        <text>2 D-alanine + ATP = D-alanyl-D-alanine + ADP + phosphate + H(+)</text>
        <dbReference type="Rhea" id="RHEA:11224"/>
        <dbReference type="ChEBI" id="CHEBI:15378"/>
        <dbReference type="ChEBI" id="CHEBI:30616"/>
        <dbReference type="ChEBI" id="CHEBI:43474"/>
        <dbReference type="ChEBI" id="CHEBI:57416"/>
        <dbReference type="ChEBI" id="CHEBI:57822"/>
        <dbReference type="ChEBI" id="CHEBI:456216"/>
        <dbReference type="EC" id="6.3.2.4"/>
    </reaction>
</comment>
<comment type="cofactor">
    <cofactor evidence="1">
        <name>Mg(2+)</name>
        <dbReference type="ChEBI" id="CHEBI:18420"/>
    </cofactor>
    <cofactor evidence="1">
        <name>Mn(2+)</name>
        <dbReference type="ChEBI" id="CHEBI:29035"/>
    </cofactor>
    <text evidence="1">Binds 2 magnesium or manganese ions per subunit.</text>
</comment>
<comment type="pathway">
    <text>Cell wall biogenesis; peptidoglycan biosynthesis.</text>
</comment>
<comment type="subunit">
    <text evidence="1">Monomer.</text>
</comment>
<comment type="subcellular location">
    <subcellularLocation>
        <location evidence="1">Cytoplasm</location>
    </subcellularLocation>
</comment>
<comment type="similarity">
    <text evidence="2">Belongs to the D-alanine--D-alanine ligase family.</text>
</comment>
<reference key="1">
    <citation type="journal article" date="2001" name="Nature">
        <title>Complete genome sequence of a multiple drug resistant Salmonella enterica serovar Typhi CT18.</title>
        <authorList>
            <person name="Parkhill J."/>
            <person name="Dougan G."/>
            <person name="James K.D."/>
            <person name="Thomson N.R."/>
            <person name="Pickard D."/>
            <person name="Wain J."/>
            <person name="Churcher C.M."/>
            <person name="Mungall K.L."/>
            <person name="Bentley S.D."/>
            <person name="Holden M.T.G."/>
            <person name="Sebaihia M."/>
            <person name="Baker S."/>
            <person name="Basham D."/>
            <person name="Brooks K."/>
            <person name="Chillingworth T."/>
            <person name="Connerton P."/>
            <person name="Cronin A."/>
            <person name="Davis P."/>
            <person name="Davies R.M."/>
            <person name="Dowd L."/>
            <person name="White N."/>
            <person name="Farrar J."/>
            <person name="Feltwell T."/>
            <person name="Hamlin N."/>
            <person name="Haque A."/>
            <person name="Hien T.T."/>
            <person name="Holroyd S."/>
            <person name="Jagels K."/>
            <person name="Krogh A."/>
            <person name="Larsen T.S."/>
            <person name="Leather S."/>
            <person name="Moule S."/>
            <person name="O'Gaora P."/>
            <person name="Parry C."/>
            <person name="Quail M.A."/>
            <person name="Rutherford K.M."/>
            <person name="Simmonds M."/>
            <person name="Skelton J."/>
            <person name="Stevens K."/>
            <person name="Whitehead S."/>
            <person name="Barrell B.G."/>
        </authorList>
    </citation>
    <scope>NUCLEOTIDE SEQUENCE [LARGE SCALE GENOMIC DNA]</scope>
    <source>
        <strain>CT18</strain>
    </source>
</reference>
<reference key="2">
    <citation type="journal article" date="2003" name="J. Bacteriol.">
        <title>Comparative genomics of Salmonella enterica serovar Typhi strains Ty2 and CT18.</title>
        <authorList>
            <person name="Deng W."/>
            <person name="Liou S.-R."/>
            <person name="Plunkett G. III"/>
            <person name="Mayhew G.F."/>
            <person name="Rose D.J."/>
            <person name="Burland V."/>
            <person name="Kodoyianni V."/>
            <person name="Schwartz D.C."/>
            <person name="Blattner F.R."/>
        </authorList>
    </citation>
    <scope>NUCLEOTIDE SEQUENCE [LARGE SCALE GENOMIC DNA]</scope>
    <source>
        <strain>ATCC 700931 / Ty2</strain>
    </source>
</reference>
<gene>
    <name type="primary">ddlB</name>
    <name type="ordered locus">STY0150</name>
    <name type="ordered locus">t0134</name>
</gene>
<dbReference type="EC" id="6.3.2.4"/>
<dbReference type="EMBL" id="AL513382">
    <property type="protein sequence ID" value="CAD01287.1"/>
    <property type="molecule type" value="Genomic_DNA"/>
</dbReference>
<dbReference type="EMBL" id="AE014613">
    <property type="protein sequence ID" value="AAO67866.1"/>
    <property type="molecule type" value="Genomic_DNA"/>
</dbReference>
<dbReference type="RefSeq" id="NP_454742.1">
    <property type="nucleotide sequence ID" value="NC_003198.1"/>
</dbReference>
<dbReference type="RefSeq" id="WP_000763895.1">
    <property type="nucleotide sequence ID" value="NZ_WSUR01000009.1"/>
</dbReference>
<dbReference type="SMR" id="Q8Z9G7"/>
<dbReference type="STRING" id="220341.gene:17584189"/>
<dbReference type="KEGG" id="stt:t0134"/>
<dbReference type="KEGG" id="sty:STY0150"/>
<dbReference type="PATRIC" id="fig|220341.7.peg.150"/>
<dbReference type="eggNOG" id="COG1181">
    <property type="taxonomic scope" value="Bacteria"/>
</dbReference>
<dbReference type="HOGENOM" id="CLU_039268_1_2_6"/>
<dbReference type="OMA" id="TQYRIPC"/>
<dbReference type="OrthoDB" id="9813261at2"/>
<dbReference type="UniPathway" id="UPA00219"/>
<dbReference type="Proteomes" id="UP000000541">
    <property type="component" value="Chromosome"/>
</dbReference>
<dbReference type="Proteomes" id="UP000002670">
    <property type="component" value="Chromosome"/>
</dbReference>
<dbReference type="GO" id="GO:0005829">
    <property type="term" value="C:cytosol"/>
    <property type="evidence" value="ECO:0007669"/>
    <property type="project" value="TreeGrafter"/>
</dbReference>
<dbReference type="GO" id="GO:0005524">
    <property type="term" value="F:ATP binding"/>
    <property type="evidence" value="ECO:0007669"/>
    <property type="project" value="UniProtKB-KW"/>
</dbReference>
<dbReference type="GO" id="GO:0008716">
    <property type="term" value="F:D-alanine-D-alanine ligase activity"/>
    <property type="evidence" value="ECO:0007669"/>
    <property type="project" value="UniProtKB-UniRule"/>
</dbReference>
<dbReference type="GO" id="GO:0046872">
    <property type="term" value="F:metal ion binding"/>
    <property type="evidence" value="ECO:0007669"/>
    <property type="project" value="UniProtKB-KW"/>
</dbReference>
<dbReference type="GO" id="GO:0071555">
    <property type="term" value="P:cell wall organization"/>
    <property type="evidence" value="ECO:0007669"/>
    <property type="project" value="UniProtKB-KW"/>
</dbReference>
<dbReference type="GO" id="GO:0009252">
    <property type="term" value="P:peptidoglycan biosynthetic process"/>
    <property type="evidence" value="ECO:0007669"/>
    <property type="project" value="UniProtKB-UniRule"/>
</dbReference>
<dbReference type="GO" id="GO:0008360">
    <property type="term" value="P:regulation of cell shape"/>
    <property type="evidence" value="ECO:0007669"/>
    <property type="project" value="UniProtKB-KW"/>
</dbReference>
<dbReference type="FunFam" id="3.30.1490.20:FF:000007">
    <property type="entry name" value="D-alanine--D-alanine ligase"/>
    <property type="match status" value="1"/>
</dbReference>
<dbReference type="FunFam" id="3.30.470.20:FF:000008">
    <property type="entry name" value="D-alanine--D-alanine ligase"/>
    <property type="match status" value="1"/>
</dbReference>
<dbReference type="FunFam" id="3.40.50.20:FF:000013">
    <property type="entry name" value="D-alanine--D-alanine ligase"/>
    <property type="match status" value="1"/>
</dbReference>
<dbReference type="Gene3D" id="3.40.50.20">
    <property type="match status" value="1"/>
</dbReference>
<dbReference type="Gene3D" id="3.30.1490.20">
    <property type="entry name" value="ATP-grasp fold, A domain"/>
    <property type="match status" value="1"/>
</dbReference>
<dbReference type="Gene3D" id="3.30.470.20">
    <property type="entry name" value="ATP-grasp fold, B domain"/>
    <property type="match status" value="1"/>
</dbReference>
<dbReference type="HAMAP" id="MF_00047">
    <property type="entry name" value="Dala_Dala_lig"/>
    <property type="match status" value="1"/>
</dbReference>
<dbReference type="InterPro" id="IPR011761">
    <property type="entry name" value="ATP-grasp"/>
</dbReference>
<dbReference type="InterPro" id="IPR013815">
    <property type="entry name" value="ATP_grasp_subdomain_1"/>
</dbReference>
<dbReference type="InterPro" id="IPR000291">
    <property type="entry name" value="D-Ala_lig_Van_CS"/>
</dbReference>
<dbReference type="InterPro" id="IPR005905">
    <property type="entry name" value="D_ala_D_ala"/>
</dbReference>
<dbReference type="InterPro" id="IPR011095">
    <property type="entry name" value="Dala_Dala_lig_C"/>
</dbReference>
<dbReference type="InterPro" id="IPR011127">
    <property type="entry name" value="Dala_Dala_lig_N"/>
</dbReference>
<dbReference type="InterPro" id="IPR016185">
    <property type="entry name" value="PreATP-grasp_dom_sf"/>
</dbReference>
<dbReference type="NCBIfam" id="TIGR01205">
    <property type="entry name" value="D_ala_D_alaTIGR"/>
    <property type="match status" value="1"/>
</dbReference>
<dbReference type="NCBIfam" id="NF002378">
    <property type="entry name" value="PRK01372.1"/>
    <property type="match status" value="1"/>
</dbReference>
<dbReference type="PANTHER" id="PTHR23132">
    <property type="entry name" value="D-ALANINE--D-ALANINE LIGASE"/>
    <property type="match status" value="1"/>
</dbReference>
<dbReference type="PANTHER" id="PTHR23132:SF23">
    <property type="entry name" value="D-ALANINE--D-ALANINE LIGASE B"/>
    <property type="match status" value="1"/>
</dbReference>
<dbReference type="Pfam" id="PF07478">
    <property type="entry name" value="Dala_Dala_lig_C"/>
    <property type="match status" value="1"/>
</dbReference>
<dbReference type="Pfam" id="PF01820">
    <property type="entry name" value="Dala_Dala_lig_N"/>
    <property type="match status" value="1"/>
</dbReference>
<dbReference type="PIRSF" id="PIRSF039102">
    <property type="entry name" value="Ddl/VanB"/>
    <property type="match status" value="1"/>
</dbReference>
<dbReference type="SUPFAM" id="SSF56059">
    <property type="entry name" value="Glutathione synthetase ATP-binding domain-like"/>
    <property type="match status" value="1"/>
</dbReference>
<dbReference type="SUPFAM" id="SSF52440">
    <property type="entry name" value="PreATP-grasp domain"/>
    <property type="match status" value="1"/>
</dbReference>
<dbReference type="PROSITE" id="PS50975">
    <property type="entry name" value="ATP_GRASP"/>
    <property type="match status" value="1"/>
</dbReference>
<dbReference type="PROSITE" id="PS00843">
    <property type="entry name" value="DALA_DALA_LIGASE_1"/>
    <property type="match status" value="1"/>
</dbReference>
<dbReference type="PROSITE" id="PS00844">
    <property type="entry name" value="DALA_DALA_LIGASE_2"/>
    <property type="match status" value="1"/>
</dbReference>
<accession>Q8Z9G7</accession>
<name>DDLB_SALTI</name>
<evidence type="ECO:0000250" key="1"/>
<evidence type="ECO:0000305" key="2"/>